<keyword id="KW-0004">4Fe-4S</keyword>
<keyword id="KW-0997">Cell inner membrane</keyword>
<keyword id="KW-1003">Cell membrane</keyword>
<keyword id="KW-0408">Iron</keyword>
<keyword id="KW-0411">Iron-sulfur</keyword>
<keyword id="KW-0472">Membrane</keyword>
<keyword id="KW-0479">Metal-binding</keyword>
<keyword id="KW-0520">NAD</keyword>
<keyword id="KW-0874">Quinone</keyword>
<keyword id="KW-1278">Translocase</keyword>
<keyword id="KW-0813">Transport</keyword>
<keyword id="KW-0830">Ubiquinone</keyword>
<gene>
    <name evidence="1" type="primary">nuoB</name>
    <name type="ordered locus">ECP_2326</name>
</gene>
<comment type="function">
    <text evidence="1">NDH-1 shuttles electrons from NADH, via FMN and iron-sulfur (Fe-S) centers, to quinones in the respiratory chain. The immediate electron acceptor for the enzyme in this species is believed to be ubiquinone. Couples the redox reaction to proton translocation (for every two electrons transferred, four hydrogen ions are translocated across the cytoplasmic membrane), and thus conserves the redox energy in a proton gradient.</text>
</comment>
<comment type="catalytic activity">
    <reaction evidence="1">
        <text>a quinone + NADH + 5 H(+)(in) = a quinol + NAD(+) + 4 H(+)(out)</text>
        <dbReference type="Rhea" id="RHEA:57888"/>
        <dbReference type="ChEBI" id="CHEBI:15378"/>
        <dbReference type="ChEBI" id="CHEBI:24646"/>
        <dbReference type="ChEBI" id="CHEBI:57540"/>
        <dbReference type="ChEBI" id="CHEBI:57945"/>
        <dbReference type="ChEBI" id="CHEBI:132124"/>
    </reaction>
</comment>
<comment type="cofactor">
    <cofactor evidence="1">
        <name>[4Fe-4S] cluster</name>
        <dbReference type="ChEBI" id="CHEBI:49883"/>
    </cofactor>
    <text evidence="1">Binds 1 [4Fe-4S] cluster.</text>
</comment>
<comment type="subunit">
    <text evidence="1">NDH-1 is composed of 13 different subunits. Subunits NuoB, CD, E, F, and G constitute the peripheral sector of the complex.</text>
</comment>
<comment type="subcellular location">
    <subcellularLocation>
        <location evidence="1">Cell inner membrane</location>
        <topology evidence="1">Peripheral membrane protein</topology>
        <orientation evidence="1">Cytoplasmic side</orientation>
    </subcellularLocation>
</comment>
<comment type="similarity">
    <text evidence="1">Belongs to the complex I 20 kDa subunit family.</text>
</comment>
<feature type="chain" id="PRO_0000376218" description="NADH-quinone oxidoreductase subunit B">
    <location>
        <begin position="1"/>
        <end position="220"/>
    </location>
</feature>
<feature type="binding site" evidence="1">
    <location>
        <position position="63"/>
    </location>
    <ligand>
        <name>[4Fe-4S] cluster</name>
        <dbReference type="ChEBI" id="CHEBI:49883"/>
    </ligand>
</feature>
<feature type="binding site" evidence="1">
    <location>
        <position position="64"/>
    </location>
    <ligand>
        <name>[4Fe-4S] cluster</name>
        <dbReference type="ChEBI" id="CHEBI:49883"/>
    </ligand>
</feature>
<feature type="binding site" evidence="1">
    <location>
        <position position="129"/>
    </location>
    <ligand>
        <name>[4Fe-4S] cluster</name>
        <dbReference type="ChEBI" id="CHEBI:49883"/>
    </ligand>
</feature>
<feature type="binding site" evidence="1">
    <location>
        <position position="158"/>
    </location>
    <ligand>
        <name>[4Fe-4S] cluster</name>
        <dbReference type="ChEBI" id="CHEBI:49883"/>
    </ligand>
</feature>
<reference key="1">
    <citation type="journal article" date="2006" name="Mol. Microbiol.">
        <title>Role of pathogenicity island-associated integrases in the genome plasticity of uropathogenic Escherichia coli strain 536.</title>
        <authorList>
            <person name="Hochhut B."/>
            <person name="Wilde C."/>
            <person name="Balling G."/>
            <person name="Middendorf B."/>
            <person name="Dobrindt U."/>
            <person name="Brzuszkiewicz E."/>
            <person name="Gottschalk G."/>
            <person name="Carniel E."/>
            <person name="Hacker J."/>
        </authorList>
    </citation>
    <scope>NUCLEOTIDE SEQUENCE [LARGE SCALE GENOMIC DNA]</scope>
    <source>
        <strain>536 / UPEC</strain>
    </source>
</reference>
<evidence type="ECO:0000255" key="1">
    <source>
        <dbReference type="HAMAP-Rule" id="MF_01356"/>
    </source>
</evidence>
<dbReference type="EC" id="7.1.1.-" evidence="1"/>
<dbReference type="EMBL" id="CP000247">
    <property type="protein sequence ID" value="ABG70320.1"/>
    <property type="molecule type" value="Genomic_DNA"/>
</dbReference>
<dbReference type="RefSeq" id="WP_000386733.1">
    <property type="nucleotide sequence ID" value="NC_008253.1"/>
</dbReference>
<dbReference type="SMR" id="Q0TFF9"/>
<dbReference type="GeneID" id="93774887"/>
<dbReference type="KEGG" id="ecp:ECP_2326"/>
<dbReference type="HOGENOM" id="CLU_055737_7_3_6"/>
<dbReference type="Proteomes" id="UP000009182">
    <property type="component" value="Chromosome"/>
</dbReference>
<dbReference type="GO" id="GO:0005886">
    <property type="term" value="C:plasma membrane"/>
    <property type="evidence" value="ECO:0007669"/>
    <property type="project" value="UniProtKB-SubCell"/>
</dbReference>
<dbReference type="GO" id="GO:0045271">
    <property type="term" value="C:respiratory chain complex I"/>
    <property type="evidence" value="ECO:0007669"/>
    <property type="project" value="TreeGrafter"/>
</dbReference>
<dbReference type="GO" id="GO:0051539">
    <property type="term" value="F:4 iron, 4 sulfur cluster binding"/>
    <property type="evidence" value="ECO:0007669"/>
    <property type="project" value="UniProtKB-KW"/>
</dbReference>
<dbReference type="GO" id="GO:0005506">
    <property type="term" value="F:iron ion binding"/>
    <property type="evidence" value="ECO:0007669"/>
    <property type="project" value="UniProtKB-UniRule"/>
</dbReference>
<dbReference type="GO" id="GO:0008137">
    <property type="term" value="F:NADH dehydrogenase (ubiquinone) activity"/>
    <property type="evidence" value="ECO:0007669"/>
    <property type="project" value="InterPro"/>
</dbReference>
<dbReference type="GO" id="GO:0050136">
    <property type="term" value="F:NADH:ubiquinone reductase (non-electrogenic) activity"/>
    <property type="evidence" value="ECO:0007669"/>
    <property type="project" value="UniProtKB-UniRule"/>
</dbReference>
<dbReference type="GO" id="GO:0048038">
    <property type="term" value="F:quinone binding"/>
    <property type="evidence" value="ECO:0007669"/>
    <property type="project" value="UniProtKB-KW"/>
</dbReference>
<dbReference type="GO" id="GO:0009060">
    <property type="term" value="P:aerobic respiration"/>
    <property type="evidence" value="ECO:0007669"/>
    <property type="project" value="TreeGrafter"/>
</dbReference>
<dbReference type="GO" id="GO:0015990">
    <property type="term" value="P:electron transport coupled proton transport"/>
    <property type="evidence" value="ECO:0007669"/>
    <property type="project" value="TreeGrafter"/>
</dbReference>
<dbReference type="FunFam" id="3.40.50.12280:FF:000002">
    <property type="entry name" value="NADH-quinone oxidoreductase subunit B"/>
    <property type="match status" value="1"/>
</dbReference>
<dbReference type="Gene3D" id="3.40.50.12280">
    <property type="match status" value="1"/>
</dbReference>
<dbReference type="HAMAP" id="MF_01356">
    <property type="entry name" value="NDH1_NuoB"/>
    <property type="match status" value="1"/>
</dbReference>
<dbReference type="InterPro" id="IPR006137">
    <property type="entry name" value="NADH_UbQ_OxRdtase-like_20kDa"/>
</dbReference>
<dbReference type="InterPro" id="IPR006138">
    <property type="entry name" value="NADH_UQ_OxRdtase_20Kd_su"/>
</dbReference>
<dbReference type="NCBIfam" id="TIGR01957">
    <property type="entry name" value="nuoB_fam"/>
    <property type="match status" value="1"/>
</dbReference>
<dbReference type="NCBIfam" id="NF005012">
    <property type="entry name" value="PRK06411.1"/>
    <property type="match status" value="1"/>
</dbReference>
<dbReference type="PANTHER" id="PTHR11995">
    <property type="entry name" value="NADH DEHYDROGENASE"/>
    <property type="match status" value="1"/>
</dbReference>
<dbReference type="PANTHER" id="PTHR11995:SF14">
    <property type="entry name" value="NADH DEHYDROGENASE [UBIQUINONE] IRON-SULFUR PROTEIN 7, MITOCHONDRIAL"/>
    <property type="match status" value="1"/>
</dbReference>
<dbReference type="Pfam" id="PF01058">
    <property type="entry name" value="Oxidored_q6"/>
    <property type="match status" value="1"/>
</dbReference>
<dbReference type="SUPFAM" id="SSF56770">
    <property type="entry name" value="HydA/Nqo6-like"/>
    <property type="match status" value="1"/>
</dbReference>
<dbReference type="PROSITE" id="PS01150">
    <property type="entry name" value="COMPLEX1_20K"/>
    <property type="match status" value="1"/>
</dbReference>
<accession>Q0TFF9</accession>
<organism>
    <name type="scientific">Escherichia coli O6:K15:H31 (strain 536 / UPEC)</name>
    <dbReference type="NCBI Taxonomy" id="362663"/>
    <lineage>
        <taxon>Bacteria</taxon>
        <taxon>Pseudomonadati</taxon>
        <taxon>Pseudomonadota</taxon>
        <taxon>Gammaproteobacteria</taxon>
        <taxon>Enterobacterales</taxon>
        <taxon>Enterobacteriaceae</taxon>
        <taxon>Escherichia</taxon>
    </lineage>
</organism>
<proteinExistence type="inferred from homology"/>
<name>NUOB_ECOL5</name>
<sequence>MDYTLTRIDPNGENDRYPLQKQEIVTDPLEQEVNKNVFMGKLNDMVNWGRKNSIWPYNFGLSCCYVEMVTSFTAVHDVARFGAEVLRASPRQADLMVVAGTCFTKMAPVIQRLYDQMLEPKWVISMGACANSGGMYDIYSVVQGVDKFIPVDVYIPGCPPRPEAYMQALMLLQESIGKERRPLSWVVGDQGVYRANMQSERERKRGERIAVTNLRTPDEI</sequence>
<protein>
    <recommendedName>
        <fullName evidence="1">NADH-quinone oxidoreductase subunit B</fullName>
        <ecNumber evidence="1">7.1.1.-</ecNumber>
    </recommendedName>
    <alternativeName>
        <fullName evidence="1">NADH dehydrogenase I subunit B</fullName>
    </alternativeName>
    <alternativeName>
        <fullName evidence="1">NDH-1 subunit B</fullName>
    </alternativeName>
</protein>